<comment type="catalytic activity">
    <reaction>
        <text>AMP + ATP = 2 ADP</text>
        <dbReference type="Rhea" id="RHEA:12973"/>
        <dbReference type="ChEBI" id="CHEBI:30616"/>
        <dbReference type="ChEBI" id="CHEBI:456215"/>
        <dbReference type="ChEBI" id="CHEBI:456216"/>
        <dbReference type="EC" id="2.7.4.3"/>
    </reaction>
</comment>
<comment type="subcellular location">
    <subcellularLocation>
        <location evidence="1">Cytoplasm</location>
    </subcellularLocation>
</comment>
<comment type="similarity">
    <text evidence="2">Belongs to the archaeal adenylate kinase family.</text>
</comment>
<sequence length="183" mass="20445">MRSVITGVAGVGKTTVLDIVSKETGIKIVNYGTLMFDLAKKRGLVENRDQMRKLSRDIQIDLQKNAATEIGRMEDVIVDTHMSIKTPFGYLPGLPEWVLREINASAFIIIEADPELILRRRQNDPTRARDEDSVESIREHQEINRAFAAAYSIFSGATVKIITNEEGKPDKAAHDIIKVIAVD</sequence>
<name>KADA_THEAC</name>
<feature type="chain" id="PRO_0000131828" description="Adenylate kinase">
    <location>
        <begin position="1"/>
        <end position="183"/>
    </location>
</feature>
<feature type="binding site" evidence="1">
    <location>
        <begin position="7"/>
        <end position="15"/>
    </location>
    <ligand>
        <name>ATP</name>
        <dbReference type="ChEBI" id="CHEBI:30616"/>
    </ligand>
</feature>
<keyword id="KW-0067">ATP-binding</keyword>
<keyword id="KW-0963">Cytoplasm</keyword>
<keyword id="KW-0418">Kinase</keyword>
<keyword id="KW-0547">Nucleotide-binding</keyword>
<keyword id="KW-1185">Reference proteome</keyword>
<keyword id="KW-0808">Transferase</keyword>
<protein>
    <recommendedName>
        <fullName>Adenylate kinase</fullName>
        <shortName>AK</shortName>
        <ecNumber>2.7.4.3</ecNumber>
    </recommendedName>
    <alternativeName>
        <fullName>ATP-AMP transphosphorylase</fullName>
    </alternativeName>
</protein>
<accession>Q9HIT1</accession>
<evidence type="ECO:0000250" key="1"/>
<evidence type="ECO:0000305" key="2"/>
<dbReference type="EC" id="2.7.4.3"/>
<dbReference type="EMBL" id="AL445067">
    <property type="protein sequence ID" value="CAC12371.1"/>
    <property type="molecule type" value="Genomic_DNA"/>
</dbReference>
<dbReference type="RefSeq" id="WP_010901654.1">
    <property type="nucleotide sequence ID" value="NC_002578.1"/>
</dbReference>
<dbReference type="SMR" id="Q9HIT1"/>
<dbReference type="FunCoup" id="Q9HIT1">
    <property type="interactions" value="64"/>
</dbReference>
<dbReference type="STRING" id="273075.gene:9572470"/>
<dbReference type="PaxDb" id="273075-Ta1247"/>
<dbReference type="EnsemblBacteria" id="CAC12371">
    <property type="protein sequence ID" value="CAC12371"/>
    <property type="gene ID" value="CAC12371"/>
</dbReference>
<dbReference type="KEGG" id="tac:Ta1247"/>
<dbReference type="eggNOG" id="arCOG01039">
    <property type="taxonomic scope" value="Archaea"/>
</dbReference>
<dbReference type="HOGENOM" id="CLU_119371_0_0_2"/>
<dbReference type="InParanoid" id="Q9HIT1"/>
<dbReference type="OrthoDB" id="26198at2157"/>
<dbReference type="Proteomes" id="UP000001024">
    <property type="component" value="Chromosome"/>
</dbReference>
<dbReference type="GO" id="GO:0005737">
    <property type="term" value="C:cytoplasm"/>
    <property type="evidence" value="ECO:0007669"/>
    <property type="project" value="UniProtKB-SubCell"/>
</dbReference>
<dbReference type="GO" id="GO:0004017">
    <property type="term" value="F:adenylate kinase activity"/>
    <property type="evidence" value="ECO:0007669"/>
    <property type="project" value="UniProtKB-UniRule"/>
</dbReference>
<dbReference type="GO" id="GO:0005524">
    <property type="term" value="F:ATP binding"/>
    <property type="evidence" value="ECO:0007669"/>
    <property type="project" value="UniProtKB-UniRule"/>
</dbReference>
<dbReference type="Gene3D" id="3.40.50.300">
    <property type="entry name" value="P-loop containing nucleotide triphosphate hydrolases"/>
    <property type="match status" value="1"/>
</dbReference>
<dbReference type="HAMAP" id="MF_00234">
    <property type="entry name" value="Adenylate_kinase_AdkA"/>
    <property type="match status" value="1"/>
</dbReference>
<dbReference type="InterPro" id="IPR023477">
    <property type="entry name" value="Adenylate_kinase_AdkA"/>
</dbReference>
<dbReference type="InterPro" id="IPR027417">
    <property type="entry name" value="P-loop_NTPase"/>
</dbReference>
<dbReference type="NCBIfam" id="NF003122">
    <property type="entry name" value="PRK04040.1"/>
    <property type="match status" value="1"/>
</dbReference>
<dbReference type="Pfam" id="PF13207">
    <property type="entry name" value="AAA_17"/>
    <property type="match status" value="1"/>
</dbReference>
<dbReference type="SUPFAM" id="SSF52540">
    <property type="entry name" value="P-loop containing nucleoside triphosphate hydrolases"/>
    <property type="match status" value="1"/>
</dbReference>
<reference key="1">
    <citation type="journal article" date="2000" name="Nature">
        <title>The genome sequence of the thermoacidophilic scavenger Thermoplasma acidophilum.</title>
        <authorList>
            <person name="Ruepp A."/>
            <person name="Graml W."/>
            <person name="Santos-Martinez M.-L."/>
            <person name="Koretke K.K."/>
            <person name="Volker C."/>
            <person name="Mewes H.-W."/>
            <person name="Frishman D."/>
            <person name="Stocker S."/>
            <person name="Lupas A.N."/>
            <person name="Baumeister W."/>
        </authorList>
    </citation>
    <scope>NUCLEOTIDE SEQUENCE [LARGE SCALE GENOMIC DNA]</scope>
    <source>
        <strain>ATCC 25905 / DSM 1728 / JCM 9062 / NBRC 15155 / AMRC-C165</strain>
    </source>
</reference>
<proteinExistence type="inferred from homology"/>
<gene>
    <name type="primary">adkA</name>
    <name type="ordered locus">Ta1247</name>
</gene>
<organism>
    <name type="scientific">Thermoplasma acidophilum (strain ATCC 25905 / DSM 1728 / JCM 9062 / NBRC 15155 / AMRC-C165)</name>
    <dbReference type="NCBI Taxonomy" id="273075"/>
    <lineage>
        <taxon>Archaea</taxon>
        <taxon>Methanobacteriati</taxon>
        <taxon>Thermoplasmatota</taxon>
        <taxon>Thermoplasmata</taxon>
        <taxon>Thermoplasmatales</taxon>
        <taxon>Thermoplasmataceae</taxon>
        <taxon>Thermoplasma</taxon>
    </lineage>
</organism>